<evidence type="ECO:0000255" key="1">
    <source>
        <dbReference type="HAMAP-Rule" id="MF_01361"/>
    </source>
</evidence>
<feature type="chain" id="PRO_0000256783" description="UPF0391 membrane protein Sde_0270">
    <location>
        <begin position="1"/>
        <end position="54"/>
    </location>
</feature>
<feature type="transmembrane region" description="Helical" evidence="1">
    <location>
        <begin position="6"/>
        <end position="26"/>
    </location>
</feature>
<feature type="transmembrane region" description="Helical" evidence="1">
    <location>
        <begin position="29"/>
        <end position="49"/>
    </location>
</feature>
<name>Y270_SACD2</name>
<protein>
    <recommendedName>
        <fullName evidence="1">UPF0391 membrane protein Sde_0270</fullName>
    </recommendedName>
</protein>
<comment type="subcellular location">
    <subcellularLocation>
        <location evidence="1">Cell membrane</location>
        <topology evidence="1">Multi-pass membrane protein</topology>
    </subcellularLocation>
</comment>
<comment type="similarity">
    <text evidence="1">Belongs to the UPF0391 family.</text>
</comment>
<proteinExistence type="inferred from homology"/>
<gene>
    <name type="ordered locus">Sde_0270</name>
</gene>
<accession>Q21P45</accession>
<dbReference type="EMBL" id="CP000282">
    <property type="protein sequence ID" value="ABD79534.1"/>
    <property type="molecule type" value="Genomic_DNA"/>
</dbReference>
<dbReference type="RefSeq" id="WP_011466758.1">
    <property type="nucleotide sequence ID" value="NC_007912.1"/>
</dbReference>
<dbReference type="STRING" id="203122.Sde_0270"/>
<dbReference type="GeneID" id="98615741"/>
<dbReference type="KEGG" id="sde:Sde_0270"/>
<dbReference type="eggNOG" id="COG5487">
    <property type="taxonomic scope" value="Bacteria"/>
</dbReference>
<dbReference type="HOGENOM" id="CLU_187346_0_0_6"/>
<dbReference type="Proteomes" id="UP000001947">
    <property type="component" value="Chromosome"/>
</dbReference>
<dbReference type="GO" id="GO:0005886">
    <property type="term" value="C:plasma membrane"/>
    <property type="evidence" value="ECO:0007669"/>
    <property type="project" value="UniProtKB-SubCell"/>
</dbReference>
<dbReference type="HAMAP" id="MF_01361">
    <property type="entry name" value="UPF0391"/>
    <property type="match status" value="1"/>
</dbReference>
<dbReference type="InterPro" id="IPR009760">
    <property type="entry name" value="DUF1328"/>
</dbReference>
<dbReference type="NCBIfam" id="NF010226">
    <property type="entry name" value="PRK13682.1-1"/>
    <property type="match status" value="1"/>
</dbReference>
<dbReference type="NCBIfam" id="NF010228">
    <property type="entry name" value="PRK13682.1-3"/>
    <property type="match status" value="1"/>
</dbReference>
<dbReference type="NCBIfam" id="NF010229">
    <property type="entry name" value="PRK13682.1-4"/>
    <property type="match status" value="1"/>
</dbReference>
<dbReference type="Pfam" id="PF07043">
    <property type="entry name" value="DUF1328"/>
    <property type="match status" value="1"/>
</dbReference>
<dbReference type="PIRSF" id="PIRSF036466">
    <property type="entry name" value="UCP036466"/>
    <property type="match status" value="1"/>
</dbReference>
<organism>
    <name type="scientific">Saccharophagus degradans (strain 2-40 / ATCC 43961 / DSM 17024)</name>
    <dbReference type="NCBI Taxonomy" id="203122"/>
    <lineage>
        <taxon>Bacteria</taxon>
        <taxon>Pseudomonadati</taxon>
        <taxon>Pseudomonadota</taxon>
        <taxon>Gammaproteobacteria</taxon>
        <taxon>Cellvibrionales</taxon>
        <taxon>Cellvibrionaceae</taxon>
        <taxon>Saccharophagus</taxon>
    </lineage>
</organism>
<sequence>MLYYSIVFLLIALVAGLFGFVGIAGVATGIAKILFFVFLIAFVVSLVIGRRPRV</sequence>
<keyword id="KW-1003">Cell membrane</keyword>
<keyword id="KW-0472">Membrane</keyword>
<keyword id="KW-1185">Reference proteome</keyword>
<keyword id="KW-0812">Transmembrane</keyword>
<keyword id="KW-1133">Transmembrane helix</keyword>
<reference key="1">
    <citation type="journal article" date="2008" name="PLoS Genet.">
        <title>Complete genome sequence of the complex carbohydrate-degrading marine bacterium, Saccharophagus degradans strain 2-40 T.</title>
        <authorList>
            <person name="Weiner R.M."/>
            <person name="Taylor L.E. II"/>
            <person name="Henrissat B."/>
            <person name="Hauser L."/>
            <person name="Land M."/>
            <person name="Coutinho P.M."/>
            <person name="Rancurel C."/>
            <person name="Saunders E.H."/>
            <person name="Longmire A.G."/>
            <person name="Zhang H."/>
            <person name="Bayer E.A."/>
            <person name="Gilbert H.J."/>
            <person name="Larimer F."/>
            <person name="Zhulin I.B."/>
            <person name="Ekborg N.A."/>
            <person name="Lamed R."/>
            <person name="Richardson P.M."/>
            <person name="Borovok I."/>
            <person name="Hutcheson S."/>
        </authorList>
    </citation>
    <scope>NUCLEOTIDE SEQUENCE [LARGE SCALE GENOMIC DNA]</scope>
    <source>
        <strain>2-40 / ATCC 43961 / DSM 17024</strain>
    </source>
</reference>